<feature type="signal peptide" evidence="3">
    <location>
        <begin position="1"/>
        <end position="17"/>
    </location>
</feature>
<feature type="chain" id="PRO_0000022206" description="Renin receptor">
    <location>
        <begin position="18"/>
        <end position="350"/>
    </location>
</feature>
<feature type="chain" id="PRO_0000447870" description="Renin receptor extracellular fragment" evidence="5">
    <location>
        <begin position="18"/>
        <end position="276"/>
    </location>
</feature>
<feature type="chain" id="PRO_0000447871" description="Renin receptor cytoplasmic fragment" evidence="5">
    <location>
        <begin position="279"/>
        <end position="350"/>
    </location>
</feature>
<feature type="topological domain" description="Extracellular" evidence="3">
    <location>
        <begin position="18"/>
        <end position="302"/>
    </location>
</feature>
<feature type="transmembrane region" description="Helical" evidence="3">
    <location>
        <begin position="303"/>
        <end position="323"/>
    </location>
</feature>
<feature type="topological domain" description="Cytoplasmic" evidence="3">
    <location>
        <begin position="324"/>
        <end position="350"/>
    </location>
</feature>
<feature type="short sequence motif" description="Mediates retrograde transport to the ER" evidence="1">
    <location>
        <begin position="346"/>
        <end position="350"/>
    </location>
</feature>
<feature type="site" description="Cleavage; by furin-like protease" evidence="1">
    <location>
        <begin position="276"/>
        <end position="277"/>
    </location>
</feature>
<feature type="site" description="Cleavage; by furin-like protease" evidence="1">
    <location>
        <begin position="278"/>
        <end position="279"/>
    </location>
</feature>
<feature type="helix" evidence="12">
    <location>
        <begin position="303"/>
        <end position="329"/>
    </location>
</feature>
<feature type="helix" evidence="12">
    <location>
        <begin position="336"/>
        <end position="342"/>
    </location>
</feature>
<protein>
    <recommendedName>
        <fullName>Renin receptor</fullName>
    </recommendedName>
    <alternativeName>
        <fullName>ATPase H(+)-transporting lysosomal accessory protein 2</fullName>
    </alternativeName>
    <alternativeName>
        <fullName>ATPase H(+)-transporting lysosomal-interacting protein 2</fullName>
    </alternativeName>
    <alternativeName>
        <fullName>Renin/prorenin receptor</fullName>
    </alternativeName>
    <component>
        <recommendedName>
            <fullName evidence="5">Renin receptor extracellular fragment</fullName>
        </recommendedName>
    </component>
    <component>
        <recommendedName>
            <fullName evidence="5">Renin receptor cytoplasmic fragment</fullName>
        </recommendedName>
    </component>
</protein>
<keyword id="KW-0002">3D-structure</keyword>
<keyword id="KW-1003">Cell membrane</keyword>
<keyword id="KW-0966">Cell projection</keyword>
<keyword id="KW-0165">Cleavage on pair of basic residues</keyword>
<keyword id="KW-0968">Cytoplasmic vesicle</keyword>
<keyword id="KW-0256">Endoplasmic reticulum</keyword>
<keyword id="KW-0967">Endosome</keyword>
<keyword id="KW-0458">Lysosome</keyword>
<keyword id="KW-0472">Membrane</keyword>
<keyword id="KW-0597">Phosphoprotein</keyword>
<keyword id="KW-0628">Postsynaptic cell membrane</keyword>
<keyword id="KW-0675">Receptor</keyword>
<keyword id="KW-1185">Reference proteome</keyword>
<keyword id="KW-0732">Signal</keyword>
<keyword id="KW-0770">Synapse</keyword>
<keyword id="KW-0812">Transmembrane</keyword>
<keyword id="KW-1133">Transmembrane helix</keyword>
<name>RENR_RAT</name>
<proteinExistence type="evidence at protein level"/>
<accession>Q6AXS4</accession>
<evidence type="ECO:0000250" key="1">
    <source>
        <dbReference type="UniProtKB" id="O75787"/>
    </source>
</evidence>
<evidence type="ECO:0000250" key="2">
    <source>
        <dbReference type="UniProtKB" id="Q9CYN9"/>
    </source>
</evidence>
<evidence type="ECO:0000255" key="3"/>
<evidence type="ECO:0000269" key="4">
    <source>
    </source>
</evidence>
<evidence type="ECO:0000305" key="5"/>
<evidence type="ECO:0007744" key="6">
    <source>
        <dbReference type="PDB" id="6VQ6"/>
    </source>
</evidence>
<evidence type="ECO:0007744" key="7">
    <source>
        <dbReference type="PDB" id="6VQ7"/>
    </source>
</evidence>
<evidence type="ECO:0007744" key="8">
    <source>
        <dbReference type="PDB" id="6VQ8"/>
    </source>
</evidence>
<evidence type="ECO:0007744" key="9">
    <source>
        <dbReference type="PDB" id="6VQC"/>
    </source>
</evidence>
<evidence type="ECO:0007744" key="10">
    <source>
        <dbReference type="PDB" id="6VQG"/>
    </source>
</evidence>
<evidence type="ECO:0007744" key="11">
    <source>
        <dbReference type="PDB" id="6VQH"/>
    </source>
</evidence>
<evidence type="ECO:0007829" key="12">
    <source>
        <dbReference type="PDB" id="9B8O"/>
    </source>
</evidence>
<gene>
    <name type="primary">Atp6ap2</name>
    <name type="synonym">Atp6ip2</name>
</gene>
<comment type="function">
    <text evidence="1 2">Multifunctional protein which functions as a renin, prorenin cellular receptor and is involved in the assembly of the lysosomal proton-transporting V-type ATPase (V-ATPase) and the acidification of the endo-lysosomal system (By similarity). May mediate renin-dependent cellular responses by activating ERK1 and ERK2 (By similarity). By increasing the catalytic efficiency of renin in AGT/angiotensinogen conversion to angiotensin I, may also play a role in the renin-angiotensin system (RAS) (By similarity). Through its function in V-type ATPase (v-ATPase) assembly and acidification of the lysosome it regulates protein degradation and may control different signaling pathways important for proper brain development, synapse morphology and synaptic transmission (By similarity).</text>
</comment>
<comment type="subunit">
    <text evidence="1 4">Interacts with renin (By similarity). Accessory component of the multisubunit proton-transporting vacuolar (V)-ATPase protein pump (PubMed:32165585). Interacts (via N-terminus) with ATP6AP1 (via N-terminus) (PubMed:32165585). Interacts with ATP6V0D1; ATP6V0D1 is a V-ATPase complex subunit and the interaction promotes V-ATPase complex assembly (PubMed:32165585). Interacts with TMEM9; TMEM9 is a V-ATPase assembly regulator and the interaction induces the interaction with ATP6V0D1 (By similarity). Interacts with VMA21 (via N-terminus); VMA21 is a V-ATPase accessory component (By similarity).</text>
</comment>
<comment type="subcellular location">
    <subcellularLocation>
        <location evidence="2">Endoplasmic reticulum membrane</location>
        <topology evidence="5">Single-pass type I membrane protein</topology>
    </subcellularLocation>
    <subcellularLocation>
        <location evidence="2">Lysosome membrane</location>
        <topology evidence="5">Single-pass type I membrane protein</topology>
    </subcellularLocation>
    <subcellularLocation>
        <location evidence="2">Cytoplasmic vesicle</location>
        <location evidence="2">Autophagosome membrane</location>
        <topology evidence="5">Single-pass type I membrane protein</topology>
    </subcellularLocation>
    <subcellularLocation>
        <location evidence="2">Cell projection</location>
        <location evidence="2">Dendritic spine membrane</location>
        <topology evidence="5">Single-pass type I membrane protein</topology>
    </subcellularLocation>
    <subcellularLocation>
        <location evidence="2">Cell projection</location>
        <location evidence="2">Axon</location>
    </subcellularLocation>
    <subcellularLocation>
        <location evidence="2">Endosome membrane</location>
    </subcellularLocation>
    <subcellularLocation>
        <location evidence="4">Cytoplasmic vesicle</location>
        <location evidence="4">Clathrin-coated vesicle membrane</location>
        <topology evidence="5">Single-pass type I membrane protein</topology>
    </subcellularLocation>
    <subcellularLocation>
        <location evidence="4">Cytoplasmic vesicle</location>
        <location evidence="4">Secretory vesicle</location>
        <location evidence="4">Synaptic vesicle membrane</location>
        <topology evidence="5">Single-pass type I membrane protein</topology>
    </subcellularLocation>
</comment>
<comment type="tissue specificity">
    <text evidence="4">Expressed in the brain.</text>
</comment>
<comment type="PTM">
    <text evidence="1">Phosphorylated.</text>
</comment>
<comment type="PTM">
    <text evidence="1">Proteolytically cleaved by a furin-like convertase in the trans-Golgi network to generate N- and C-terminal fragments.</text>
</comment>
<sequence length="350" mass="39082">MAVLVVLLSSLVSSALANEFSILRSPGSVVFRNGNWPIPGDRIPDVAALSMGFSVKEDLSWPGLAVGNLFHRPRATIMVTVKGVDKLALPTGSVISYPLENAVPFSLDSVANSIHSLFSEETPVVLQLAPSEERVYMVGKANSVFEDLSVTLRQLRNRLFQENSVLNSLPLNSLSRNNEVDLLFLSELQVLHDISSLLSRHKHLAKDHSPDLYSLELAGLDELGKRYGEDSEQFRDASRILVDALQKFADDMYSLYGGNAVVELVTVKSFDTSLVRKSRTILETKQENTQSPYNLAYKYNLEYSVVFNLVLWIMTGLALAVIITSYNIWNMDPGYDSIIYRMTNQKIRMD</sequence>
<reference key="1">
    <citation type="journal article" date="2004" name="J. Clin. Invest.">
        <title>Inhibition of diabetic nephropathy by a decoy peptide corresponding to the 'handle' region for nonproteolytic activation of prorenin.</title>
        <authorList>
            <person name="Ichihara A."/>
            <person name="Hayashi M."/>
            <person name="Kaneshiro Y."/>
            <person name="Suzuki F."/>
            <person name="Nakagawa T."/>
            <person name="Tada Y."/>
            <person name="Koura Y."/>
            <person name="Nishiyama A."/>
            <person name="Okada H."/>
            <person name="Uddin M.N."/>
            <person name="Nabi A.H.M.N."/>
            <person name="Ishida Y."/>
            <person name="Inagami T."/>
            <person name="Saruta T."/>
        </authorList>
    </citation>
    <scope>NUCLEOTIDE SEQUENCE [MRNA]</scope>
</reference>
<reference key="2">
    <citation type="journal article" date="2004" name="Genome Res.">
        <title>The status, quality, and expansion of the NIH full-length cDNA project: the Mammalian Gene Collection (MGC).</title>
        <authorList>
            <consortium name="The MGC Project Team"/>
        </authorList>
    </citation>
    <scope>NUCLEOTIDE SEQUENCE [LARGE SCALE MRNA]</scope>
    <source>
        <tissue>Kidney</tissue>
    </source>
</reference>
<reference evidence="6 7 8 9 10 11" key="3">
    <citation type="journal article" date="2020" name="Science">
        <title>Structure of V-ATPase from the mammalian brain.</title>
        <authorList>
            <person name="Abbas Y.M."/>
            <person name="Wu D."/>
            <person name="Bueler S.A."/>
            <person name="Robinson C.V."/>
            <person name="Rubinstein J.L."/>
        </authorList>
    </citation>
    <scope>STRUCTURE BY ELECTRON MICROSCOPY (3.80 ANGSTROMS) IN COMPLEX WITH THE V-ATPASE</scope>
    <scope>SUBCELLULAR LOCATION</scope>
    <scope>IDENTIFICATION BY MASS SPECTROMETRY</scope>
    <scope>TISSUE SPECIFICITY</scope>
</reference>
<dbReference type="EMBL" id="AB188298">
    <property type="protein sequence ID" value="BAD67178.1"/>
    <property type="molecule type" value="mRNA"/>
</dbReference>
<dbReference type="EMBL" id="BC079339">
    <property type="protein sequence ID" value="AAH79339.1"/>
    <property type="molecule type" value="mRNA"/>
</dbReference>
<dbReference type="RefSeq" id="NP_001007092.1">
    <property type="nucleotide sequence ID" value="NM_001007091.1"/>
</dbReference>
<dbReference type="PDB" id="6VQ6">
    <property type="method" value="EM"/>
    <property type="resolution" value="3.90 A"/>
    <property type="chains" value="p=1-350"/>
</dbReference>
<dbReference type="PDB" id="6VQ7">
    <property type="method" value="EM"/>
    <property type="resolution" value="4.00 A"/>
    <property type="chains" value="p=1-350"/>
</dbReference>
<dbReference type="PDB" id="6VQ8">
    <property type="method" value="EM"/>
    <property type="resolution" value="3.90 A"/>
    <property type="chains" value="p=1-350"/>
</dbReference>
<dbReference type="PDB" id="6VQC">
    <property type="method" value="EM"/>
    <property type="resolution" value="3.80 A"/>
    <property type="chains" value="p=1-350"/>
</dbReference>
<dbReference type="PDB" id="6VQG">
    <property type="method" value="EM"/>
    <property type="resolution" value="4.20 A"/>
    <property type="chains" value="p=1-350"/>
</dbReference>
<dbReference type="PDB" id="6VQH">
    <property type="method" value="EM"/>
    <property type="resolution" value="4.40 A"/>
    <property type="chains" value="p=1-350"/>
</dbReference>
<dbReference type="PDB" id="7UZF">
    <property type="method" value="EM"/>
    <property type="resolution" value="3.80 A"/>
    <property type="chains" value="p=1-350"/>
</dbReference>
<dbReference type="PDB" id="7UZG">
    <property type="method" value="EM"/>
    <property type="resolution" value="3.70 A"/>
    <property type="chains" value="p=1-350"/>
</dbReference>
<dbReference type="PDB" id="7UZH">
    <property type="method" value="EM"/>
    <property type="resolution" value="3.80 A"/>
    <property type="chains" value="p=1-350"/>
</dbReference>
<dbReference type="PDB" id="7UZI">
    <property type="method" value="EM"/>
    <property type="resolution" value="3.90 A"/>
    <property type="chains" value="p=1-350"/>
</dbReference>
<dbReference type="PDB" id="9B8O">
    <property type="method" value="EM"/>
    <property type="resolution" value="3.20 A"/>
    <property type="chains" value="p=1-350"/>
</dbReference>
<dbReference type="PDB" id="9BRB">
    <property type="method" value="EM"/>
    <property type="resolution" value="3.60 A"/>
    <property type="chains" value="p=1-350"/>
</dbReference>
<dbReference type="PDB" id="9BRC">
    <property type="method" value="EM"/>
    <property type="resolution" value="3.90 A"/>
    <property type="chains" value="p=1-350"/>
</dbReference>
<dbReference type="PDB" id="9BRD">
    <property type="method" value="EM"/>
    <property type="resolution" value="3.50 A"/>
    <property type="chains" value="p=1-350"/>
</dbReference>
<dbReference type="PDBsum" id="6VQ6"/>
<dbReference type="PDBsum" id="6VQ7"/>
<dbReference type="PDBsum" id="6VQ8"/>
<dbReference type="PDBsum" id="6VQC"/>
<dbReference type="PDBsum" id="6VQG"/>
<dbReference type="PDBsum" id="6VQH"/>
<dbReference type="PDBsum" id="7UZF"/>
<dbReference type="PDBsum" id="7UZG"/>
<dbReference type="PDBsum" id="7UZH"/>
<dbReference type="PDBsum" id="7UZI"/>
<dbReference type="PDBsum" id="9B8O"/>
<dbReference type="PDBsum" id="9BRB"/>
<dbReference type="PDBsum" id="9BRC"/>
<dbReference type="PDBsum" id="9BRD"/>
<dbReference type="EMDB" id="EMD-21348"/>
<dbReference type="EMDB" id="EMD-21349"/>
<dbReference type="EMDB" id="EMD-21350"/>
<dbReference type="EMDB" id="EMD-26909"/>
<dbReference type="EMDB" id="EMD-26910"/>
<dbReference type="EMDB" id="EMD-26911"/>
<dbReference type="EMDB" id="EMD-26912"/>
<dbReference type="EMDB" id="EMD-44350"/>
<dbReference type="SMR" id="Q6AXS4"/>
<dbReference type="CORUM" id="Q6AXS4"/>
<dbReference type="FunCoup" id="Q6AXS4">
    <property type="interactions" value="2380"/>
</dbReference>
<dbReference type="IntAct" id="Q6AXS4">
    <property type="interactions" value="1"/>
</dbReference>
<dbReference type="STRING" id="10116.ENSRNOP00000005138"/>
<dbReference type="PhosphoSitePlus" id="Q6AXS4"/>
<dbReference type="jPOST" id="Q6AXS4"/>
<dbReference type="PaxDb" id="10116-ENSRNOP00000005138"/>
<dbReference type="GeneID" id="302526"/>
<dbReference type="KEGG" id="rno:302526"/>
<dbReference type="UCSC" id="RGD:1561269">
    <property type="organism name" value="rat"/>
</dbReference>
<dbReference type="AGR" id="RGD:1561269"/>
<dbReference type="CTD" id="10159"/>
<dbReference type="RGD" id="1561269">
    <property type="gene designation" value="Atp6ap2"/>
</dbReference>
<dbReference type="VEuPathDB" id="HostDB:ENSRNOG00000003858"/>
<dbReference type="eggNOG" id="KOG4737">
    <property type="taxonomic scope" value="Eukaryota"/>
</dbReference>
<dbReference type="HOGENOM" id="CLU_065819_0_0_1"/>
<dbReference type="InParanoid" id="Q6AXS4"/>
<dbReference type="OrthoDB" id="7866065at2759"/>
<dbReference type="PhylomeDB" id="Q6AXS4"/>
<dbReference type="TreeFam" id="TF106137"/>
<dbReference type="Reactome" id="R-RNO-2022377">
    <property type="pathway name" value="Metabolism of Angiotensinogen to Angiotensins"/>
</dbReference>
<dbReference type="Reactome" id="R-RNO-6798695">
    <property type="pathway name" value="Neutrophil degranulation"/>
</dbReference>
<dbReference type="PRO" id="PR:Q6AXS4"/>
<dbReference type="Proteomes" id="UP000002494">
    <property type="component" value="Chromosome X"/>
</dbReference>
<dbReference type="Bgee" id="ENSRNOG00000003858">
    <property type="expression patterns" value="Expressed in cerebellum and 19 other cell types or tissues"/>
</dbReference>
<dbReference type="GO" id="GO:0016324">
    <property type="term" value="C:apical plasma membrane"/>
    <property type="evidence" value="ECO:0000314"/>
    <property type="project" value="RGD"/>
</dbReference>
<dbReference type="GO" id="GO:0000421">
    <property type="term" value="C:autophagosome membrane"/>
    <property type="evidence" value="ECO:0007669"/>
    <property type="project" value="UniProtKB-SubCell"/>
</dbReference>
<dbReference type="GO" id="GO:0030424">
    <property type="term" value="C:axon"/>
    <property type="evidence" value="ECO:0007669"/>
    <property type="project" value="UniProtKB-SubCell"/>
</dbReference>
<dbReference type="GO" id="GO:0044297">
    <property type="term" value="C:cell body"/>
    <property type="evidence" value="ECO:0000314"/>
    <property type="project" value="RGD"/>
</dbReference>
<dbReference type="GO" id="GO:0030665">
    <property type="term" value="C:clathrin-coated vesicle membrane"/>
    <property type="evidence" value="ECO:0007669"/>
    <property type="project" value="UniProtKB-SubCell"/>
</dbReference>
<dbReference type="GO" id="GO:0032591">
    <property type="term" value="C:dendritic spine membrane"/>
    <property type="evidence" value="ECO:0007669"/>
    <property type="project" value="UniProtKB-SubCell"/>
</dbReference>
<dbReference type="GO" id="GO:0005789">
    <property type="term" value="C:endoplasmic reticulum membrane"/>
    <property type="evidence" value="ECO:0000266"/>
    <property type="project" value="RGD"/>
</dbReference>
<dbReference type="GO" id="GO:0010008">
    <property type="term" value="C:endosome membrane"/>
    <property type="evidence" value="ECO:0000250"/>
    <property type="project" value="UniProtKB"/>
</dbReference>
<dbReference type="GO" id="GO:0009897">
    <property type="term" value="C:external side of plasma membrane"/>
    <property type="evidence" value="ECO:0000266"/>
    <property type="project" value="RGD"/>
</dbReference>
<dbReference type="GO" id="GO:0005615">
    <property type="term" value="C:extracellular space"/>
    <property type="evidence" value="ECO:0000314"/>
    <property type="project" value="RGD"/>
</dbReference>
<dbReference type="GO" id="GO:0005765">
    <property type="term" value="C:lysosomal membrane"/>
    <property type="evidence" value="ECO:0000250"/>
    <property type="project" value="UniProtKB"/>
</dbReference>
<dbReference type="GO" id="GO:0005764">
    <property type="term" value="C:lysosome"/>
    <property type="evidence" value="ECO:0000266"/>
    <property type="project" value="RGD"/>
</dbReference>
<dbReference type="GO" id="GO:0016020">
    <property type="term" value="C:membrane"/>
    <property type="evidence" value="ECO:0000266"/>
    <property type="project" value="RGD"/>
</dbReference>
<dbReference type="GO" id="GO:0045211">
    <property type="term" value="C:postsynaptic membrane"/>
    <property type="evidence" value="ECO:0007669"/>
    <property type="project" value="UniProtKB-KW"/>
</dbReference>
<dbReference type="GO" id="GO:0030672">
    <property type="term" value="C:synaptic vesicle membrane"/>
    <property type="evidence" value="ECO:0000314"/>
    <property type="project" value="SynGO"/>
</dbReference>
<dbReference type="GO" id="GO:0016471">
    <property type="term" value="C:vacuolar proton-transporting V-type ATPase complex"/>
    <property type="evidence" value="ECO:0000250"/>
    <property type="project" value="UniProtKB"/>
</dbReference>
<dbReference type="GO" id="GO:0000220">
    <property type="term" value="C:vacuolar proton-transporting V-type ATPase, V0 domain"/>
    <property type="evidence" value="ECO:0000250"/>
    <property type="project" value="UniProtKB"/>
</dbReference>
<dbReference type="GO" id="GO:0038023">
    <property type="term" value="F:signaling receptor activity"/>
    <property type="evidence" value="ECO:0007669"/>
    <property type="project" value="InterPro"/>
</dbReference>
<dbReference type="GO" id="GO:0002003">
    <property type="term" value="P:angiotensin maturation"/>
    <property type="evidence" value="ECO:0000266"/>
    <property type="project" value="RGD"/>
</dbReference>
<dbReference type="GO" id="GO:0021626">
    <property type="term" value="P:central nervous system maturation"/>
    <property type="evidence" value="ECO:0000250"/>
    <property type="project" value="UniProtKB"/>
</dbReference>
<dbReference type="GO" id="GO:0048069">
    <property type="term" value="P:eye pigmentation"/>
    <property type="evidence" value="ECO:0000266"/>
    <property type="project" value="RGD"/>
</dbReference>
<dbReference type="GO" id="GO:0060323">
    <property type="term" value="P:head morphogenesis"/>
    <property type="evidence" value="ECO:0000266"/>
    <property type="project" value="RGD"/>
</dbReference>
<dbReference type="GO" id="GO:0007042">
    <property type="term" value="P:lysosomal lumen acidification"/>
    <property type="evidence" value="ECO:0000250"/>
    <property type="project" value="UniProtKB"/>
</dbReference>
<dbReference type="GO" id="GO:0090263">
    <property type="term" value="P:positive regulation of canonical Wnt signaling pathway"/>
    <property type="evidence" value="ECO:0000250"/>
    <property type="project" value="UniProtKB"/>
</dbReference>
<dbReference type="GO" id="GO:0032914">
    <property type="term" value="P:positive regulation of transforming growth factor beta1 production"/>
    <property type="evidence" value="ECO:0000266"/>
    <property type="project" value="RGD"/>
</dbReference>
<dbReference type="GO" id="GO:0030177">
    <property type="term" value="P:positive regulation of Wnt signaling pathway"/>
    <property type="evidence" value="ECO:0000266"/>
    <property type="project" value="RGD"/>
</dbReference>
<dbReference type="GO" id="GO:0043408">
    <property type="term" value="P:regulation of MAPK cascade"/>
    <property type="evidence" value="ECO:0000266"/>
    <property type="project" value="RGD"/>
</dbReference>
<dbReference type="GO" id="GO:0021903">
    <property type="term" value="P:rostrocaudal neural tube patterning"/>
    <property type="evidence" value="ECO:0000266"/>
    <property type="project" value="RGD"/>
</dbReference>
<dbReference type="GO" id="GO:0097401">
    <property type="term" value="P:synaptic vesicle lumen acidification"/>
    <property type="evidence" value="ECO:0000266"/>
    <property type="project" value="RGD"/>
</dbReference>
<dbReference type="InterPro" id="IPR056780">
    <property type="entry name" value="Renin_r_C"/>
</dbReference>
<dbReference type="InterPro" id="IPR012493">
    <property type="entry name" value="Renin_rcpt"/>
</dbReference>
<dbReference type="PANTHER" id="PTHR13351">
    <property type="entry name" value="RENIN RECEPTOR"/>
    <property type="match status" value="1"/>
</dbReference>
<dbReference type="PANTHER" id="PTHR13351:SF1">
    <property type="entry name" value="RENIN RECEPTOR"/>
    <property type="match status" value="1"/>
</dbReference>
<dbReference type="Pfam" id="PF07850">
    <property type="entry name" value="Renin_r"/>
    <property type="match status" value="1"/>
</dbReference>
<dbReference type="Pfam" id="PF25294">
    <property type="entry name" value="RENR_N"/>
    <property type="match status" value="1"/>
</dbReference>
<organism>
    <name type="scientific">Rattus norvegicus</name>
    <name type="common">Rat</name>
    <dbReference type="NCBI Taxonomy" id="10116"/>
    <lineage>
        <taxon>Eukaryota</taxon>
        <taxon>Metazoa</taxon>
        <taxon>Chordata</taxon>
        <taxon>Craniata</taxon>
        <taxon>Vertebrata</taxon>
        <taxon>Euteleostomi</taxon>
        <taxon>Mammalia</taxon>
        <taxon>Eutheria</taxon>
        <taxon>Euarchontoglires</taxon>
        <taxon>Glires</taxon>
        <taxon>Rodentia</taxon>
        <taxon>Myomorpha</taxon>
        <taxon>Muroidea</taxon>
        <taxon>Muridae</taxon>
        <taxon>Murinae</taxon>
        <taxon>Rattus</taxon>
    </lineage>
</organism>